<comment type="function">
    <text evidence="1">Catalyzes the transfer of endogenously produced octanoic acid from octanoyl-acyl-carrier-protein onto the lipoyl domains of lipoate-dependent enzymes. Lipoyl-ACP can also act as a substrate although octanoyl-ACP is likely to be the physiological substrate.</text>
</comment>
<comment type="catalytic activity">
    <reaction evidence="1">
        <text>octanoyl-[ACP] + L-lysyl-[protein] = N(6)-octanoyl-L-lysyl-[protein] + holo-[ACP] + H(+)</text>
        <dbReference type="Rhea" id="RHEA:17665"/>
        <dbReference type="Rhea" id="RHEA-COMP:9636"/>
        <dbReference type="Rhea" id="RHEA-COMP:9685"/>
        <dbReference type="Rhea" id="RHEA-COMP:9752"/>
        <dbReference type="Rhea" id="RHEA-COMP:9928"/>
        <dbReference type="ChEBI" id="CHEBI:15378"/>
        <dbReference type="ChEBI" id="CHEBI:29969"/>
        <dbReference type="ChEBI" id="CHEBI:64479"/>
        <dbReference type="ChEBI" id="CHEBI:78463"/>
        <dbReference type="ChEBI" id="CHEBI:78809"/>
        <dbReference type="EC" id="2.3.1.181"/>
    </reaction>
</comment>
<comment type="pathway">
    <text evidence="1">Protein modification; protein lipoylation via endogenous pathway; protein N(6)-(lipoyl)lysine from octanoyl-[acyl-carrier-protein]: step 1/2.</text>
</comment>
<comment type="subcellular location">
    <subcellularLocation>
        <location evidence="1">Cytoplasm</location>
    </subcellularLocation>
</comment>
<comment type="miscellaneous">
    <text evidence="1">In the reaction, the free carboxyl group of octanoic acid is attached via an amide linkage to the epsilon-amino group of a specific lysine residue of lipoyl domains of lipoate-dependent enzymes.</text>
</comment>
<comment type="similarity">
    <text evidence="1">Belongs to the LipB family.</text>
</comment>
<gene>
    <name evidence="1" type="primary">lipB</name>
    <name type="ordered locus">HNE_1062</name>
</gene>
<proteinExistence type="inferred from homology"/>
<name>LIPB_HYPNA</name>
<reference key="1">
    <citation type="journal article" date="2006" name="J. Bacteriol.">
        <title>Comparative genomic evidence for a close relationship between the dimorphic prosthecate bacteria Hyphomonas neptunium and Caulobacter crescentus.</title>
        <authorList>
            <person name="Badger J.H."/>
            <person name="Hoover T.R."/>
            <person name="Brun Y.V."/>
            <person name="Weiner R.M."/>
            <person name="Laub M.T."/>
            <person name="Alexandre G."/>
            <person name="Mrazek J."/>
            <person name="Ren Q."/>
            <person name="Paulsen I.T."/>
            <person name="Nelson K.E."/>
            <person name="Khouri H.M."/>
            <person name="Radune D."/>
            <person name="Sosa J."/>
            <person name="Dodson R.J."/>
            <person name="Sullivan S.A."/>
            <person name="Rosovitz M.J."/>
            <person name="Madupu R."/>
            <person name="Brinkac L.M."/>
            <person name="Durkin A.S."/>
            <person name="Daugherty S.C."/>
            <person name="Kothari S.P."/>
            <person name="Giglio M.G."/>
            <person name="Zhou L."/>
            <person name="Haft D.H."/>
            <person name="Selengut J.D."/>
            <person name="Davidsen T.M."/>
            <person name="Yang Q."/>
            <person name="Zafar N."/>
            <person name="Ward N.L."/>
        </authorList>
    </citation>
    <scope>NUCLEOTIDE SEQUENCE [LARGE SCALE GENOMIC DNA]</scope>
    <source>
        <strain>ATCC 15444</strain>
    </source>
</reference>
<protein>
    <recommendedName>
        <fullName evidence="1">Octanoyltransferase</fullName>
        <ecNumber evidence="1">2.3.1.181</ecNumber>
    </recommendedName>
    <alternativeName>
        <fullName evidence="1">Lipoate-protein ligase B</fullName>
    </alternativeName>
    <alternativeName>
        <fullName evidence="1">Lipoyl/octanoyl transferase</fullName>
    </alternativeName>
    <alternativeName>
        <fullName evidence="1">Octanoyl-[acyl-carrier-protein]-protein N-octanoyltransferase</fullName>
    </alternativeName>
</protein>
<organism>
    <name type="scientific">Hyphomonas neptunium (strain ATCC 15444)</name>
    <dbReference type="NCBI Taxonomy" id="228405"/>
    <lineage>
        <taxon>Bacteria</taxon>
        <taxon>Pseudomonadati</taxon>
        <taxon>Pseudomonadota</taxon>
        <taxon>Alphaproteobacteria</taxon>
        <taxon>Hyphomonadales</taxon>
        <taxon>Hyphomonadaceae</taxon>
        <taxon>Hyphomonas</taxon>
    </lineage>
</organism>
<evidence type="ECO:0000255" key="1">
    <source>
        <dbReference type="HAMAP-Rule" id="MF_00013"/>
    </source>
</evidence>
<evidence type="ECO:0000255" key="2">
    <source>
        <dbReference type="PROSITE-ProRule" id="PRU01067"/>
    </source>
</evidence>
<feature type="chain" id="PRO_0000321639" description="Octanoyltransferase">
    <location>
        <begin position="1"/>
        <end position="234"/>
    </location>
</feature>
<feature type="domain" description="BPL/LPL catalytic" evidence="2">
    <location>
        <begin position="35"/>
        <end position="221"/>
    </location>
</feature>
<feature type="active site" description="Acyl-thioester intermediate" evidence="1">
    <location>
        <position position="181"/>
    </location>
</feature>
<feature type="binding site" evidence="1">
    <location>
        <begin position="74"/>
        <end position="81"/>
    </location>
    <ligand>
        <name>substrate</name>
    </ligand>
</feature>
<feature type="binding site" evidence="1">
    <location>
        <begin position="150"/>
        <end position="152"/>
    </location>
    <ligand>
        <name>substrate</name>
    </ligand>
</feature>
<feature type="binding site" evidence="1">
    <location>
        <begin position="163"/>
        <end position="165"/>
    </location>
    <ligand>
        <name>substrate</name>
    </ligand>
</feature>
<feature type="site" description="Lowers pKa of active site Cys" evidence="1">
    <location>
        <position position="147"/>
    </location>
</feature>
<keyword id="KW-0012">Acyltransferase</keyword>
<keyword id="KW-0963">Cytoplasm</keyword>
<keyword id="KW-1185">Reference proteome</keyword>
<keyword id="KW-0808">Transferase</keyword>
<dbReference type="EC" id="2.3.1.181" evidence="1"/>
<dbReference type="EMBL" id="CP000158">
    <property type="protein sequence ID" value="ABI78326.1"/>
    <property type="molecule type" value="Genomic_DNA"/>
</dbReference>
<dbReference type="RefSeq" id="WP_011646084.1">
    <property type="nucleotide sequence ID" value="NC_008358.1"/>
</dbReference>
<dbReference type="SMR" id="Q0C3A9"/>
<dbReference type="STRING" id="228405.HNE_1062"/>
<dbReference type="KEGG" id="hne:HNE_1062"/>
<dbReference type="eggNOG" id="COG0321">
    <property type="taxonomic scope" value="Bacteria"/>
</dbReference>
<dbReference type="HOGENOM" id="CLU_035168_3_0_5"/>
<dbReference type="UniPathway" id="UPA00538">
    <property type="reaction ID" value="UER00592"/>
</dbReference>
<dbReference type="Proteomes" id="UP000001959">
    <property type="component" value="Chromosome"/>
</dbReference>
<dbReference type="GO" id="GO:0005737">
    <property type="term" value="C:cytoplasm"/>
    <property type="evidence" value="ECO:0007669"/>
    <property type="project" value="UniProtKB-SubCell"/>
</dbReference>
<dbReference type="GO" id="GO:0033819">
    <property type="term" value="F:lipoyl(octanoyl) transferase activity"/>
    <property type="evidence" value="ECO:0007669"/>
    <property type="project" value="UniProtKB-EC"/>
</dbReference>
<dbReference type="GO" id="GO:0036211">
    <property type="term" value="P:protein modification process"/>
    <property type="evidence" value="ECO:0007669"/>
    <property type="project" value="InterPro"/>
</dbReference>
<dbReference type="CDD" id="cd16444">
    <property type="entry name" value="LipB"/>
    <property type="match status" value="1"/>
</dbReference>
<dbReference type="Gene3D" id="3.30.930.10">
    <property type="entry name" value="Bira Bifunctional Protein, Domain 2"/>
    <property type="match status" value="1"/>
</dbReference>
<dbReference type="HAMAP" id="MF_00013">
    <property type="entry name" value="LipB"/>
    <property type="match status" value="1"/>
</dbReference>
<dbReference type="InterPro" id="IPR045864">
    <property type="entry name" value="aa-tRNA-synth_II/BPL/LPL"/>
</dbReference>
<dbReference type="InterPro" id="IPR004143">
    <property type="entry name" value="BPL_LPL_catalytic"/>
</dbReference>
<dbReference type="InterPro" id="IPR000544">
    <property type="entry name" value="Octanoyltransferase"/>
</dbReference>
<dbReference type="InterPro" id="IPR020605">
    <property type="entry name" value="Octanoyltransferase_CS"/>
</dbReference>
<dbReference type="NCBIfam" id="TIGR00214">
    <property type="entry name" value="lipB"/>
    <property type="match status" value="1"/>
</dbReference>
<dbReference type="NCBIfam" id="NF010921">
    <property type="entry name" value="PRK14341.1"/>
    <property type="match status" value="1"/>
</dbReference>
<dbReference type="PANTHER" id="PTHR10993:SF7">
    <property type="entry name" value="LIPOYLTRANSFERASE 2, MITOCHONDRIAL-RELATED"/>
    <property type="match status" value="1"/>
</dbReference>
<dbReference type="PANTHER" id="PTHR10993">
    <property type="entry name" value="OCTANOYLTRANSFERASE"/>
    <property type="match status" value="1"/>
</dbReference>
<dbReference type="Pfam" id="PF21948">
    <property type="entry name" value="LplA-B_cat"/>
    <property type="match status" value="1"/>
</dbReference>
<dbReference type="PIRSF" id="PIRSF016262">
    <property type="entry name" value="LPLase"/>
    <property type="match status" value="1"/>
</dbReference>
<dbReference type="SUPFAM" id="SSF55681">
    <property type="entry name" value="Class II aaRS and biotin synthetases"/>
    <property type="match status" value="1"/>
</dbReference>
<dbReference type="PROSITE" id="PS51733">
    <property type="entry name" value="BPL_LPL_CATALYTIC"/>
    <property type="match status" value="1"/>
</dbReference>
<dbReference type="PROSITE" id="PS01313">
    <property type="entry name" value="LIPB"/>
    <property type="match status" value="1"/>
</dbReference>
<accession>Q0C3A9</accession>
<sequence length="234" mass="25468">MQNFPPVEWAVSDAPVPYEAALAVMEARARAIREDGAPELVWFLEHPPLYTAGTSARIEDLKDPARFPVFEAGRGGQYTYHGPGQRVAYVMLDVAARGRDVRAFVAHLEAWIIQALAAFNVEGGMRDGRVGVWVDRTEPGGPPREDKIAAIGVRLKRWVSFHGISLNVEPELDHFTGITPCGIADPRYGVTSLADLGRIISMEEADIALKAAFQQVFASPLVRVDPPVTGSVPA</sequence>